<protein>
    <recommendedName>
        <fullName>B-cell antigen receptor complex-associated protein beta chain</fullName>
    </recommendedName>
    <alternativeName>
        <fullName>B-cell-specific glycoprotein B29</fullName>
    </alternativeName>
    <alternativeName>
        <fullName>Ig-beta</fullName>
    </alternativeName>
    <alternativeName>
        <fullName>Immunoglobulin-associated B29 protein</fullName>
    </alternativeName>
    <cdAntigenName>CD79b</cdAntigenName>
</protein>
<comment type="function">
    <text evidence="6 11 12">Required in cooperation with CD79A for initiation of the signal transduction cascade activated by the B-cell antigen receptor complex (BCR) which leads to internalization of the complex, trafficking to late endosomes and antigen presentation. Enhances phosphorylation of CD79A, possibly by recruiting kinases which phosphorylate CD79A or by recruiting proteins which bind to CD79A and protect it from dephosphorylation.</text>
</comment>
<comment type="subunit">
    <text evidence="1 9">Heterodimer of alpha and beta chains; disulfide-linked. Part of the B-cell antigen receptor complex where the alpha/beta chain heterodimer is non-covalently associated with an antigen-specific membrane-bound surface immunoglobulin of two heavy chains and two light chains (PubMed:35981043). Interacts with LYN (By similarity).</text>
</comment>
<comment type="interaction">
    <interactant intactId="EBI-2873732">
        <id>P40259</id>
    </interactant>
    <interactant intactId="EBI-347996">
        <id>O43765</id>
        <label>SGTA</label>
    </interactant>
    <organismsDiffer>false</organismsDiffer>
    <experiments>6</experiments>
</comment>
<comment type="interaction">
    <interactant intactId="EBI-2873732">
        <id>P40259</id>
    </interactant>
    <interactant intactId="EBI-744081">
        <id>Q96EQ0</id>
        <label>SGTB</label>
    </interactant>
    <organismsDiffer>false</organismsDiffer>
    <experiments>3</experiments>
</comment>
<comment type="interaction">
    <interactant intactId="EBI-15869023">
        <id>P40259-1</id>
    </interactant>
    <interactant intactId="EBI-15869023">
        <id>P40259-1</id>
        <label>CD79B</label>
    </interactant>
    <organismsDiffer>false</organismsDiffer>
    <experiments>3</experiments>
</comment>
<comment type="subcellular location">
    <subcellularLocation>
        <location>Cell membrane</location>
        <topology>Single-pass type I membrane protein</topology>
    </subcellularLocation>
    <text evidence="1">Following antigen binding, the BCR has been shown to translocate from detergent-soluble regions of the cell membrane to lipid rafts although signal transduction through the complex can also occur outside lipid rafts.</text>
</comment>
<comment type="alternative products">
    <event type="alternative splicing"/>
    <isoform>
        <id>P40259-1</id>
        <name>Long</name>
        <sequence type="displayed"/>
    </isoform>
    <isoform>
        <id>P40259-2</id>
        <name>Short</name>
        <sequence type="described" ref="VSP_002477"/>
    </isoform>
    <isoform>
        <id>P40259-3</id>
        <name>3</name>
        <sequence type="described" ref="VSP_047222"/>
    </isoform>
</comment>
<comment type="tissue specificity">
    <text>B-cells.</text>
</comment>
<comment type="domain">
    <text evidence="9">The transmembrane helices of CD79A and CD79B chains and two IgM heavy chains assembly in a four-helix bundle structure that appears to be conserved among different BCR isotypes.</text>
</comment>
<comment type="PTM">
    <text>Phosphorylated on tyrosine upon B-cell activation by SRC-type Tyr-kinases such as BLK, LYN and SYK.</text>
</comment>
<comment type="disease" evidence="7">
    <disease id="DI-02889">
        <name>Agammaglobulinemia 6, autosomal recessive</name>
        <acronym>AGM6</acronym>
        <description>A primary immunodeficiency characterized by profoundly low or absent serum antibodies and low or absent circulating B-cells due to an early block of B-cell development. Affected individuals develop severe infections in the first years of life.</description>
        <dbReference type="MIM" id="612692"/>
    </disease>
    <text>The disease is caused by variants affecting the gene represented in this entry.</text>
</comment>
<comment type="online information" name="CD79Bbase">
    <link uri="https://databases.lovd.nl/shared/genes/CD79B"/>
    <text>CD79B mutation db</text>
</comment>
<keyword id="KW-0002">3D-structure</keyword>
<keyword id="KW-1064">Adaptive immunity</keyword>
<keyword id="KW-0025">Alternative splicing</keyword>
<keyword id="KW-1003">Cell membrane</keyword>
<keyword id="KW-0903">Direct protein sequencing</keyword>
<keyword id="KW-0225">Disease variant</keyword>
<keyword id="KW-1015">Disulfide bond</keyword>
<keyword id="KW-0325">Glycoprotein</keyword>
<keyword id="KW-0391">Immunity</keyword>
<keyword id="KW-0393">Immunoglobulin domain</keyword>
<keyword id="KW-0472">Membrane</keyword>
<keyword id="KW-0597">Phosphoprotein</keyword>
<keyword id="KW-1267">Proteomics identification</keyword>
<keyword id="KW-0675">Receptor</keyword>
<keyword id="KW-1185">Reference proteome</keyword>
<keyword id="KW-0732">Signal</keyword>
<keyword id="KW-0812">Transmembrane</keyword>
<keyword id="KW-1133">Transmembrane helix</keyword>
<gene>
    <name type="primary">CD79B</name>
    <name type="synonym">B29</name>
    <name type="synonym">IGB</name>
</gene>
<organism>
    <name type="scientific">Homo sapiens</name>
    <name type="common">Human</name>
    <dbReference type="NCBI Taxonomy" id="9606"/>
    <lineage>
        <taxon>Eukaryota</taxon>
        <taxon>Metazoa</taxon>
        <taxon>Chordata</taxon>
        <taxon>Craniata</taxon>
        <taxon>Vertebrata</taxon>
        <taxon>Euteleostomi</taxon>
        <taxon>Mammalia</taxon>
        <taxon>Eutheria</taxon>
        <taxon>Euarchontoglires</taxon>
        <taxon>Primates</taxon>
        <taxon>Haplorrhini</taxon>
        <taxon>Catarrhini</taxon>
        <taxon>Hominidae</taxon>
        <taxon>Homo</taxon>
    </lineage>
</organism>
<accession>P40259</accession>
<accession>Q53FS2</accession>
<accession>Q9BU06</accession>
<name>CD79B_HUMAN</name>
<proteinExistence type="evidence at protein level"/>
<evidence type="ECO:0000250" key="1"/>
<evidence type="ECO:0000250" key="2">
    <source>
        <dbReference type="UniProtKB" id="P15530"/>
    </source>
</evidence>
<evidence type="ECO:0000255" key="3"/>
<evidence type="ECO:0000255" key="4">
    <source>
        <dbReference type="PROSITE-ProRule" id="PRU00114"/>
    </source>
</evidence>
<evidence type="ECO:0000255" key="5">
    <source>
        <dbReference type="PROSITE-ProRule" id="PRU00379"/>
    </source>
</evidence>
<evidence type="ECO:0000269" key="6">
    <source>
    </source>
</evidence>
<evidence type="ECO:0000269" key="7">
    <source>
    </source>
</evidence>
<evidence type="ECO:0000269" key="8">
    <source>
    </source>
</evidence>
<evidence type="ECO:0000269" key="9">
    <source>
    </source>
</evidence>
<evidence type="ECO:0000269" key="10">
    <source>
    </source>
</evidence>
<evidence type="ECO:0000269" key="11">
    <source>
    </source>
</evidence>
<evidence type="ECO:0000269" key="12">
    <source>
    </source>
</evidence>
<evidence type="ECO:0000303" key="13">
    <source>
    </source>
</evidence>
<evidence type="ECO:0000303" key="14">
    <source ref="6"/>
</evidence>
<evidence type="ECO:0000303" key="15">
    <source ref="7"/>
</evidence>
<evidence type="ECO:0000305" key="16"/>
<evidence type="ECO:0007744" key="17">
    <source>
        <dbReference type="PDB" id="7XQ8"/>
    </source>
</evidence>
<evidence type="ECO:0007829" key="18">
    <source>
        <dbReference type="PDB" id="3KG5"/>
    </source>
</evidence>
<evidence type="ECO:0007829" key="19">
    <source>
        <dbReference type="PDB" id="7WSO"/>
    </source>
</evidence>
<reference key="1">
    <citation type="journal article" date="1992" name="Eur. J. Immunol.">
        <title>Cloning and sequencing of the cDNA encoding the human homologue of the murine immunoglobulin-associated protein B29.</title>
        <authorList>
            <person name="Mueller B.S."/>
            <person name="Cooper L."/>
            <person name="Terhorst C."/>
        </authorList>
    </citation>
    <scope>NUCLEOTIDE SEQUENCE [MRNA] (ISOFORM LONG)</scope>
</reference>
<reference key="2">
    <citation type="journal article" date="1993" name="Genomics">
        <title>Isolation and chromosomal mapping of the human immunoglobulin-associated B29 gene (IGB).</title>
        <authorList>
            <person name="Wood W.J. Jr."/>
            <person name="Thompson A.A."/>
            <person name="Korenberg J."/>
            <person name="Chen X.-N."/>
            <person name="May W."/>
            <person name="Wall R."/>
            <person name="Denny C.T."/>
        </authorList>
    </citation>
    <scope>NUCLEOTIDE SEQUENCE [MRNA] (ISOFORM LONG)</scope>
</reference>
<reference key="3">
    <citation type="journal article" date="1993" name="J. Immunol.">
        <title>The human Ig-beta cDNA sequence, a homologue of murine B29, is identical in B cell and plasma cell lines producing all the human Ig isotypes.</title>
        <authorList>
            <person name="Hashimoto S."/>
            <person name="Gregersen P.K."/>
            <person name="Chiorazzi N."/>
        </authorList>
    </citation>
    <scope>NUCLEOTIDE SEQUENCE [MRNA] (ISOFORM LONG)</scope>
</reference>
<reference key="4">
    <citation type="journal article" date="1994" name="Immunogenetics">
        <title>The complete sequence of the human CD79b (Ig beta/B29) gene: identification of a conserved exon/intron organization, immunoglobulin-like regulatory regions, and allelic polymorphism.</title>
        <authorList>
            <person name="Hashimoto S."/>
            <person name="Chiorazzi N."/>
            <person name="Gregersen P.K."/>
        </authorList>
    </citation>
    <scope>NUCLEOTIDE SEQUENCE [GENOMIC DNA] (ISOFORM LONG)</scope>
</reference>
<reference key="5">
    <citation type="journal article" date="1995" name="Mol. Immunol.">
        <title>Alternative splicing of CD79a (Ig-alpha/mb-1) and CD79b (Ig-beta/B29) RNA transcripts in human B cells.</title>
        <authorList>
            <person name="Hashimoto S."/>
            <person name="Chiorazzi N."/>
            <person name="Gregersen P.K."/>
        </authorList>
    </citation>
    <scope>NUCLEOTIDE SEQUENCE [MRNA] (ISOFORM SHORT)</scope>
</reference>
<reference key="6">
    <citation type="submission" date="1994-12" db="EMBL/GenBank/DDBJ databases">
        <authorList>
            <person name="Koyama M."/>
            <person name="Nakamura T."/>
        </authorList>
    </citation>
    <scope>NUCLEOTIDE SEQUENCE [MRNA] (ISOFORM SHORT)</scope>
</reference>
<reference key="7">
    <citation type="submission" date="2005-04" db="EMBL/GenBank/DDBJ databases">
        <authorList>
            <person name="Suzuki Y."/>
            <person name="Sugano S."/>
            <person name="Totoki Y."/>
            <person name="Toyoda A."/>
            <person name="Takeda T."/>
            <person name="Sakaki Y."/>
            <person name="Tanaka A."/>
            <person name="Yokoyama S."/>
        </authorList>
    </citation>
    <scope>NUCLEOTIDE SEQUENCE [LARGE SCALE MRNA] (ISOFORM 3)</scope>
    <source>
        <tissue>Small intestine</tissue>
        <tissue>Spleen</tissue>
    </source>
</reference>
<reference key="8">
    <citation type="journal article" date="2004" name="Genome Res.">
        <title>The status, quality, and expansion of the NIH full-length cDNA project: the Mammalian Gene Collection (MGC).</title>
        <authorList>
            <consortium name="The MGC Project Team"/>
        </authorList>
    </citation>
    <scope>NUCLEOTIDE SEQUENCE [LARGE SCALE MRNA] (ISOFORM LONG)</scope>
    <source>
        <tissue>Lymph</tissue>
    </source>
</reference>
<reference key="9">
    <citation type="journal article" date="1994" name="Mol. Immunol.">
        <title>Isolation and chemical characterization of the human B29 and mb-1 proteins of the B cell antigen receptor complex.</title>
        <authorList>
            <person name="Vasile S."/>
            <person name="Coligan J.E."/>
            <person name="Yoshida M."/>
            <person name="Seon B.K."/>
        </authorList>
    </citation>
    <scope>PROTEIN SEQUENCE OF 29-45</scope>
</reference>
<reference key="10">
    <citation type="journal article" date="1996" name="J. Biol. Chem.">
        <title>Cooperativity and segregation of function within the Ig-alpha/beta heterodimer of the B cell antigen receptor complex.</title>
        <authorList>
            <person name="Luisiri P."/>
            <person name="Lee Y.J."/>
            <person name="Eisfelder B.J."/>
            <person name="Clark M.R."/>
        </authorList>
    </citation>
    <scope>FUNCTION</scope>
</reference>
<reference key="11">
    <citation type="journal article" date="1997" name="Blood">
        <title>B-cell antigen receptor-induced apoptosis requires both Ig alpha and Ig beta.</title>
        <authorList>
            <person name="Tseng J."/>
            <person name="Eisfelder B.J."/>
            <person name="Clark M.R."/>
        </authorList>
    </citation>
    <scope>FUNCTION</scope>
</reference>
<reference key="12">
    <citation type="journal article" date="2002" name="J. Immunol.">
        <title>B cell progenitors are arrested in maturation but have intact VDJ recombination in the absence of Ig-alpha and Ig-beta.</title>
        <authorList>
            <person name="Pelanda R."/>
            <person name="Braun U."/>
            <person name="Hobeika E."/>
            <person name="Nussenzweig M.C."/>
            <person name="Reth M."/>
        </authorList>
    </citation>
    <scope>FUNCTION</scope>
</reference>
<reference key="13">
    <citation type="journal article" date="2011" name="BMC Syst. Biol.">
        <title>Initial characterization of the human central proteome.</title>
        <authorList>
            <person name="Burkard T.R."/>
            <person name="Planyavsky M."/>
            <person name="Kaupe I."/>
            <person name="Breitwieser F.P."/>
            <person name="Buerckstuemmer T."/>
            <person name="Bennett K.L."/>
            <person name="Superti-Furga G."/>
            <person name="Colinge J."/>
        </authorList>
    </citation>
    <scope>IDENTIFICATION BY MASS SPECTROMETRY [LARGE SCALE ANALYSIS]</scope>
</reference>
<reference key="14">
    <citation type="journal article" date="2010" name="Structure">
        <title>Structural and functional studies of Igalphabeta and its assembly with the B cell antigen receptor.</title>
        <authorList>
            <person name="Radaev S."/>
            <person name="Zou Z."/>
            <person name="Tolar P."/>
            <person name="Nguyen K."/>
            <person name="Nguyen A."/>
            <person name="Krueger P.D."/>
            <person name="Stutzman N."/>
            <person name="Pierce S."/>
            <person name="Sun P.D."/>
        </authorList>
    </citation>
    <scope>X-RAY CRYSTALLOGRAPHY (3.2 ANGSTROMS) OF 26-159</scope>
    <scope>SUBUNIT</scope>
    <scope>DISULFIDE BONDS</scope>
</reference>
<reference key="15">
    <citation type="journal article" date="2022" name="Science">
        <title>Cryo-EM structure of the human IgM B cell receptor.</title>
        <authorList>
            <person name="Su Q."/>
            <person name="Chen M."/>
            <person name="Shi Y."/>
            <person name="Zhang X."/>
            <person name="Huang G."/>
            <person name="Huang B."/>
            <person name="Liu D."/>
            <person name="Liu Z."/>
            <person name="Shi Y."/>
        </authorList>
    </citation>
    <scope>STRUCTURE BY ELECTRON MICROSCOPY (3.30 ANGSTROMS) IN COMPLEX WITH CD79A AND IMMUNOGLOBULIN M</scope>
    <scope>DISULFIDE BONDS</scope>
    <scope>SUBUNIT</scope>
    <scope>CHARACTERIZATION OF IGM BCR</scope>
    <scope>DOMAIN</scope>
    <scope>GLYCOSYLATION AT ASN-73 AND ASN-101</scope>
    <scope>MUTAGENESIS OF ASP-55; LYS-56; ARG-57 AND ILE-161</scope>
</reference>
<reference key="16">
    <citation type="journal article" date="2007" name="J. Immunol.">
        <title>A hypomorphic mutation in Igbeta (CD79b) in a patient with immunodeficiency and a leaky defect in B cell development.</title>
        <authorList>
            <person name="Dobbs A.K."/>
            <person name="Yang T."/>
            <person name="Farmer D."/>
            <person name="Kager L."/>
            <person name="Parolini O."/>
            <person name="Conley M.E."/>
        </authorList>
    </citation>
    <scope>VARIANT AGM6 SER-137</scope>
</reference>
<sequence length="229" mass="26048">MARLALSPVPSHWMVALLLLLSAEPVPAARSEDRYRNPKGSACSRIWQSPRFIARKRGFTVKMHCYMNSASGNVSWLWKQEMDENPQQLKLEKGRMEESQNESLATLTIQGIRFEDNGIYFCQQKCNNTSEVYQGCGTELRVMGFSTLAQLKQRNTLKDGIIMIQTLLIILFIIVPIFLLLDKDDSKAGMEEDHTYEGLDIDQTATYEDIVTLRTGEVKWSVGEHPGQE</sequence>
<feature type="signal peptide" evidence="10">
    <location>
        <begin position="1"/>
        <end position="28"/>
    </location>
</feature>
<feature type="chain" id="PRO_0000014560" description="B-cell antigen receptor complex-associated protein beta chain">
    <location>
        <begin position="29"/>
        <end position="229"/>
    </location>
</feature>
<feature type="topological domain" description="Extracellular" evidence="3">
    <location>
        <begin position="29"/>
        <end position="159"/>
    </location>
</feature>
<feature type="transmembrane region" description="Helical" evidence="3">
    <location>
        <begin position="160"/>
        <end position="180"/>
    </location>
</feature>
<feature type="topological domain" description="Cytoplasmic" evidence="3">
    <location>
        <begin position="181"/>
        <end position="229"/>
    </location>
</feature>
<feature type="domain" description="Ig-like V-type">
    <location>
        <begin position="38"/>
        <end position="138"/>
    </location>
</feature>
<feature type="domain" description="ITAM" evidence="5">
    <location>
        <begin position="185"/>
        <end position="213"/>
    </location>
</feature>
<feature type="modified residue" description="Phosphotyrosine; by SRC-type Tyr-kinases" evidence="2 5">
    <location>
        <position position="196"/>
    </location>
</feature>
<feature type="modified residue" description="Phosphotyrosine; by SRC-type Tyr-kinases" evidence="2 5">
    <location>
        <position position="207"/>
    </location>
</feature>
<feature type="glycosylation site" description="N-linked (GlcNAc...) asparagine" evidence="3 9 17">
    <location>
        <position position="73"/>
    </location>
</feature>
<feature type="glycosylation site" description="N-linked (GlcNAc...) asparagine" evidence="3 9 17">
    <location>
        <position position="101"/>
    </location>
</feature>
<feature type="glycosylation site" description="N-linked (GlcNAc...) asparagine" evidence="3">
    <location>
        <position position="127"/>
    </location>
</feature>
<feature type="glycosylation site" description="N-linked (GlcNAc...) asparagine" evidence="3">
    <location>
        <position position="128"/>
    </location>
</feature>
<feature type="disulfide bond" evidence="4 8 9 17">
    <location>
        <begin position="43"/>
        <end position="126"/>
    </location>
</feature>
<feature type="disulfide bond" evidence="4 8 9 17">
    <location>
        <begin position="65"/>
        <end position="122"/>
    </location>
</feature>
<feature type="disulfide bond" description="Interchain (with C-119 in alpha chain)" evidence="4 8 9 17">
    <location>
        <position position="136"/>
    </location>
</feature>
<feature type="splice variant" id="VSP_047222" description="In isoform 3." evidence="15">
    <original>A</original>
    <variation>AA</variation>
    <location>
        <position position="23"/>
    </location>
</feature>
<feature type="splice variant" id="VSP_002477" description="In isoform Short." evidence="13 14">
    <location>
        <begin position="41"/>
        <end position="144"/>
    </location>
</feature>
<feature type="sequence variant" id="VAR_057833" description="In AGM6; dbSNP:rs121912424." evidence="7">
    <original>G</original>
    <variation>S</variation>
    <location>
        <position position="137"/>
    </location>
</feature>
<feature type="mutagenesis site" description="Blocks IgM BCR assembly." evidence="9">
    <original>RKR</original>
    <variation>AAA</variation>
    <location>
        <begin position="55"/>
        <end position="57"/>
    </location>
</feature>
<feature type="mutagenesis site" description="Blocks IgM BCR assembly." evidence="9">
    <original>I</original>
    <variation>W</variation>
    <location>
        <position position="161"/>
    </location>
</feature>
<feature type="sequence conflict" description="In Ref. 3; AAB24822." evidence="16" ref="3">
    <original>G</original>
    <variation>A</variation>
    <location>
        <position position="58"/>
    </location>
</feature>
<feature type="sequence conflict" description="In Ref. 1; AAA58387." evidence="16" ref="1">
    <original>G</original>
    <variation>R</variation>
    <location>
        <position position="58"/>
    </location>
</feature>
<feature type="sequence conflict" description="In Ref. 3; AAB24822." evidence="16" ref="3">
    <original>E</original>
    <variation>A</variation>
    <location>
        <position position="84"/>
    </location>
</feature>
<feature type="strand" evidence="19">
    <location>
        <begin position="46"/>
        <end position="49"/>
    </location>
</feature>
<feature type="strand" evidence="18">
    <location>
        <begin position="51"/>
        <end position="56"/>
    </location>
</feature>
<feature type="strand" evidence="19">
    <location>
        <begin position="60"/>
        <end position="66"/>
    </location>
</feature>
<feature type="strand" evidence="19">
    <location>
        <begin position="69"/>
        <end position="72"/>
    </location>
</feature>
<feature type="strand" evidence="19">
    <location>
        <begin position="74"/>
        <end position="79"/>
    </location>
</feature>
<feature type="turn" evidence="19">
    <location>
        <begin position="93"/>
        <end position="95"/>
    </location>
</feature>
<feature type="strand" evidence="19">
    <location>
        <begin position="96"/>
        <end position="100"/>
    </location>
</feature>
<feature type="strand" evidence="19">
    <location>
        <begin position="105"/>
        <end position="111"/>
    </location>
</feature>
<feature type="helix" evidence="19">
    <location>
        <begin position="114"/>
        <end position="116"/>
    </location>
</feature>
<feature type="strand" evidence="19">
    <location>
        <begin position="118"/>
        <end position="125"/>
    </location>
</feature>
<feature type="strand" evidence="19">
    <location>
        <begin position="127"/>
        <end position="129"/>
    </location>
</feature>
<feature type="strand" evidence="19">
    <location>
        <begin position="132"/>
        <end position="134"/>
    </location>
</feature>
<feature type="strand" evidence="19">
    <location>
        <begin position="138"/>
        <end position="140"/>
    </location>
</feature>
<feature type="helix" evidence="19">
    <location>
        <begin position="151"/>
        <end position="181"/>
    </location>
</feature>
<dbReference type="EMBL" id="M80461">
    <property type="protein sequence ID" value="AAA58387.1"/>
    <property type="molecule type" value="mRNA"/>
</dbReference>
<dbReference type="EMBL" id="M89957">
    <property type="protein sequence ID" value="AAA64459.1"/>
    <property type="molecule type" value="mRNA"/>
</dbReference>
<dbReference type="EMBL" id="S52229">
    <property type="protein sequence ID" value="AAB24822.2"/>
    <property type="molecule type" value="mRNA"/>
</dbReference>
<dbReference type="EMBL" id="L27587">
    <property type="protein sequence ID" value="AAA72424.1"/>
    <property type="molecule type" value="Genomic_DNA"/>
</dbReference>
<dbReference type="EMBL" id="S79249">
    <property type="protein sequence ID" value="AAC60654.1"/>
    <property type="molecule type" value="mRNA"/>
</dbReference>
<dbReference type="EMBL" id="X83539">
    <property type="protein sequence ID" value="CAA58522.1"/>
    <property type="molecule type" value="mRNA"/>
</dbReference>
<dbReference type="EMBL" id="AK222954">
    <property type="protein sequence ID" value="BAD96674.1"/>
    <property type="molecule type" value="mRNA"/>
</dbReference>
<dbReference type="EMBL" id="AK223210">
    <property type="protein sequence ID" value="BAD96930.1"/>
    <property type="molecule type" value="mRNA"/>
</dbReference>
<dbReference type="EMBL" id="BC002975">
    <property type="protein sequence ID" value="AAH02975.2"/>
    <property type="molecule type" value="mRNA"/>
</dbReference>
<dbReference type="EMBL" id="BC032651">
    <property type="protein sequence ID" value="AAH32651.1"/>
    <property type="molecule type" value="mRNA"/>
</dbReference>
<dbReference type="CCDS" id="CCDS11655.1">
    <molecule id="P40259-1"/>
</dbReference>
<dbReference type="CCDS" id="CCDS11656.1">
    <molecule id="P40259-2"/>
</dbReference>
<dbReference type="CCDS" id="CCDS42372.1">
    <molecule id="P40259-3"/>
</dbReference>
<dbReference type="PIR" id="I54534">
    <property type="entry name" value="A46527"/>
</dbReference>
<dbReference type="RefSeq" id="NP_000617.1">
    <molecule id="P40259-1"/>
    <property type="nucleotide sequence ID" value="NM_000626.4"/>
</dbReference>
<dbReference type="RefSeq" id="NP_001035022.1">
    <molecule id="P40259-3"/>
    <property type="nucleotide sequence ID" value="NM_001039933.3"/>
</dbReference>
<dbReference type="RefSeq" id="NP_067613.1">
    <molecule id="P40259-2"/>
    <property type="nucleotide sequence ID" value="NM_021602.4"/>
</dbReference>
<dbReference type="PDB" id="3KG5">
    <property type="method" value="X-ray"/>
    <property type="resolution" value="3.20 A"/>
    <property type="chains" value="A/B=26-159"/>
</dbReference>
<dbReference type="PDB" id="7WSO">
    <property type="method" value="EM"/>
    <property type="resolution" value="3.03 A"/>
    <property type="chains" value="C=44-182"/>
</dbReference>
<dbReference type="PDB" id="7WSP">
    <property type="method" value="EM"/>
    <property type="resolution" value="4.09 A"/>
    <property type="chains" value="C=44-182"/>
</dbReference>
<dbReference type="PDB" id="7XQ8">
    <property type="method" value="EM"/>
    <property type="resolution" value="3.30 A"/>
    <property type="chains" value="B=1-229"/>
</dbReference>
<dbReference type="PDB" id="7XT6">
    <property type="method" value="EM"/>
    <property type="resolution" value="3.63 A"/>
    <property type="chains" value="C=44-182"/>
</dbReference>
<dbReference type="PDBsum" id="3KG5"/>
<dbReference type="PDBsum" id="7WSO"/>
<dbReference type="PDBsum" id="7WSP"/>
<dbReference type="PDBsum" id="7XQ8"/>
<dbReference type="PDBsum" id="7XT6"/>
<dbReference type="BMRB" id="P40259"/>
<dbReference type="EMDB" id="EMD-32762"/>
<dbReference type="EMDB" id="EMD-32763"/>
<dbReference type="EMDB" id="EMD-33390"/>
<dbReference type="EMDB" id="EMD-33440"/>
<dbReference type="SMR" id="P40259"/>
<dbReference type="BioGRID" id="107412">
    <property type="interactions" value="181"/>
</dbReference>
<dbReference type="CORUM" id="P40259"/>
<dbReference type="DIP" id="DIP-59497N"/>
<dbReference type="ELM" id="P40259"/>
<dbReference type="FunCoup" id="P40259">
    <property type="interactions" value="633"/>
</dbReference>
<dbReference type="IntAct" id="P40259">
    <property type="interactions" value="105"/>
</dbReference>
<dbReference type="STRING" id="9606.ENSP00000376544"/>
<dbReference type="ChEMBL" id="CHEMBL3712852"/>
<dbReference type="DrugBank" id="DB12240">
    <property type="generic name" value="Polatuzumab vedotin"/>
</dbReference>
<dbReference type="DrugCentral" id="P40259"/>
<dbReference type="GlyCosmos" id="P40259">
    <property type="glycosylation" value="4 sites, No reported glycans"/>
</dbReference>
<dbReference type="GlyGen" id="P40259">
    <property type="glycosylation" value="5 sites"/>
</dbReference>
<dbReference type="iPTMnet" id="P40259"/>
<dbReference type="PhosphoSitePlus" id="P40259"/>
<dbReference type="BioMuta" id="CD79B"/>
<dbReference type="DMDM" id="728994"/>
<dbReference type="MassIVE" id="P40259"/>
<dbReference type="PaxDb" id="9606-ENSP00000376544"/>
<dbReference type="PeptideAtlas" id="P40259"/>
<dbReference type="ProteomicsDB" id="55356">
    <molecule id="P40259-1"/>
</dbReference>
<dbReference type="ProteomicsDB" id="55357">
    <molecule id="P40259-2"/>
</dbReference>
<dbReference type="TopDownProteomics" id="P40259-2">
    <molecule id="P40259-2"/>
</dbReference>
<dbReference type="ABCD" id="P40259">
    <property type="antibodies" value="22 sequenced antibodies"/>
</dbReference>
<dbReference type="Antibodypedia" id="2218">
    <property type="antibodies" value="1129 antibodies from 43 providers"/>
</dbReference>
<dbReference type="DNASU" id="974"/>
<dbReference type="Ensembl" id="ENST00000006750.8">
    <molecule id="P40259-1"/>
    <property type="protein sequence ID" value="ENSP00000006750.4"/>
    <property type="gene ID" value="ENSG00000007312.14"/>
</dbReference>
<dbReference type="Ensembl" id="ENST00000349817.2">
    <molecule id="P40259-2"/>
    <property type="protein sequence ID" value="ENSP00000245862.2"/>
    <property type="gene ID" value="ENSG00000007312.14"/>
</dbReference>
<dbReference type="Ensembl" id="ENST00000392795.7">
    <molecule id="P40259-3"/>
    <property type="protein sequence ID" value="ENSP00000376544.3"/>
    <property type="gene ID" value="ENSG00000007312.14"/>
</dbReference>
<dbReference type="GeneID" id="974"/>
<dbReference type="KEGG" id="hsa:974"/>
<dbReference type="MANE-Select" id="ENST00000006750.8">
    <property type="protein sequence ID" value="ENSP00000006750.4"/>
    <property type="RefSeq nucleotide sequence ID" value="NM_000626.4"/>
    <property type="RefSeq protein sequence ID" value="NP_000617.1"/>
</dbReference>
<dbReference type="UCSC" id="uc002jdp.2">
    <molecule id="P40259-1"/>
    <property type="organism name" value="human"/>
</dbReference>
<dbReference type="AGR" id="HGNC:1699"/>
<dbReference type="CTD" id="974"/>
<dbReference type="DisGeNET" id="974"/>
<dbReference type="GeneCards" id="CD79B"/>
<dbReference type="HGNC" id="HGNC:1699">
    <property type="gene designation" value="CD79B"/>
</dbReference>
<dbReference type="HPA" id="ENSG00000007312">
    <property type="expression patterns" value="Tissue enriched (lymphoid)"/>
</dbReference>
<dbReference type="MalaCards" id="CD79B"/>
<dbReference type="MIM" id="147245">
    <property type="type" value="gene"/>
</dbReference>
<dbReference type="MIM" id="612692">
    <property type="type" value="phenotype"/>
</dbReference>
<dbReference type="neXtProt" id="NX_P40259"/>
<dbReference type="OpenTargets" id="ENSG00000007312"/>
<dbReference type="Orphanet" id="33110">
    <property type="disease" value="Autosomal non-syndromic agammaglobulinemia"/>
</dbReference>
<dbReference type="PharmGKB" id="PA26238"/>
<dbReference type="VEuPathDB" id="HostDB:ENSG00000007312"/>
<dbReference type="eggNOG" id="ENOG502S7X8">
    <property type="taxonomic scope" value="Eukaryota"/>
</dbReference>
<dbReference type="GeneTree" id="ENSGT00940000154363"/>
<dbReference type="HOGENOM" id="CLU_084230_0_0_1"/>
<dbReference type="InParanoid" id="P40259"/>
<dbReference type="OMA" id="PVHFICY"/>
<dbReference type="OrthoDB" id="9894386at2759"/>
<dbReference type="PAN-GO" id="P40259">
    <property type="GO annotations" value="4 GO annotations based on evolutionary models"/>
</dbReference>
<dbReference type="PhylomeDB" id="P40259"/>
<dbReference type="TreeFam" id="TF336032"/>
<dbReference type="PathwayCommons" id="P40259"/>
<dbReference type="Reactome" id="R-HSA-5690714">
    <property type="pathway name" value="CD22 mediated BCR regulation"/>
</dbReference>
<dbReference type="Reactome" id="R-HSA-9679191">
    <property type="pathway name" value="Potential therapeutics for SARS"/>
</dbReference>
<dbReference type="Reactome" id="R-HSA-983695">
    <property type="pathway name" value="Antigen activates B Cell Receptor (BCR) leading to generation of second messengers"/>
</dbReference>
<dbReference type="SignaLink" id="P40259"/>
<dbReference type="SIGNOR" id="P40259"/>
<dbReference type="BioGRID-ORCS" id="974">
    <property type="hits" value="18 hits in 1157 CRISPR screens"/>
</dbReference>
<dbReference type="ChiTaRS" id="CD79B">
    <property type="organism name" value="human"/>
</dbReference>
<dbReference type="EvolutionaryTrace" id="P40259"/>
<dbReference type="GeneWiki" id="CD79B"/>
<dbReference type="GenomeRNAi" id="974"/>
<dbReference type="Pharos" id="P40259">
    <property type="development level" value="Tclin"/>
</dbReference>
<dbReference type="PRO" id="PR:P40259"/>
<dbReference type="Proteomes" id="UP000005640">
    <property type="component" value="Chromosome 17"/>
</dbReference>
<dbReference type="RNAct" id="P40259">
    <property type="molecule type" value="protein"/>
</dbReference>
<dbReference type="Bgee" id="ENSG00000007312">
    <property type="expression patterns" value="Expressed in granulocyte and 148 other cell types or tissues"/>
</dbReference>
<dbReference type="GO" id="GO:0019815">
    <property type="term" value="C:B cell receptor complex"/>
    <property type="evidence" value="ECO:0000314"/>
    <property type="project" value="UniProt"/>
</dbReference>
<dbReference type="GO" id="GO:0009897">
    <property type="term" value="C:external side of plasma membrane"/>
    <property type="evidence" value="ECO:0000318"/>
    <property type="project" value="GO_Central"/>
</dbReference>
<dbReference type="GO" id="GO:0070062">
    <property type="term" value="C:extracellular exosome"/>
    <property type="evidence" value="ECO:0007005"/>
    <property type="project" value="UniProtKB"/>
</dbReference>
<dbReference type="GO" id="GO:0071755">
    <property type="term" value="C:IgM B cell receptor complex"/>
    <property type="evidence" value="ECO:0000314"/>
    <property type="project" value="UniProtKB"/>
</dbReference>
<dbReference type="GO" id="GO:0005886">
    <property type="term" value="C:plasma membrane"/>
    <property type="evidence" value="ECO:0000304"/>
    <property type="project" value="Reactome"/>
</dbReference>
<dbReference type="GO" id="GO:0042802">
    <property type="term" value="F:identical protein binding"/>
    <property type="evidence" value="ECO:0000314"/>
    <property type="project" value="CAFA"/>
</dbReference>
<dbReference type="GO" id="GO:0004888">
    <property type="term" value="F:transmembrane signaling receptor activity"/>
    <property type="evidence" value="ECO:0007669"/>
    <property type="project" value="Ensembl"/>
</dbReference>
<dbReference type="GO" id="GO:0002250">
    <property type="term" value="P:adaptive immune response"/>
    <property type="evidence" value="ECO:0007669"/>
    <property type="project" value="UniProtKB-KW"/>
</dbReference>
<dbReference type="GO" id="GO:0030183">
    <property type="term" value="P:B cell differentiation"/>
    <property type="evidence" value="ECO:0000318"/>
    <property type="project" value="GO_Central"/>
</dbReference>
<dbReference type="GO" id="GO:0050853">
    <property type="term" value="P:B cell receptor signaling pathway"/>
    <property type="evidence" value="ECO:0000318"/>
    <property type="project" value="GO_Central"/>
</dbReference>
<dbReference type="GO" id="GO:0006955">
    <property type="term" value="P:immune response"/>
    <property type="evidence" value="ECO:0000304"/>
    <property type="project" value="ProtInc"/>
</dbReference>
<dbReference type="GO" id="GO:0009617">
    <property type="term" value="P:response to bacterium"/>
    <property type="evidence" value="ECO:0007669"/>
    <property type="project" value="Ensembl"/>
</dbReference>
<dbReference type="GO" id="GO:0007165">
    <property type="term" value="P:signal transduction"/>
    <property type="evidence" value="ECO:0000304"/>
    <property type="project" value="ProtInc"/>
</dbReference>
<dbReference type="CDD" id="cd16096">
    <property type="entry name" value="IgV_CD79b_beta"/>
    <property type="match status" value="1"/>
</dbReference>
<dbReference type="DisProt" id="DP01487"/>
<dbReference type="FunFam" id="2.60.40.10:FF:001554">
    <property type="entry name" value="B-cell antigen receptor complex-associated protein beta chain"/>
    <property type="match status" value="1"/>
</dbReference>
<dbReference type="Gene3D" id="2.60.40.10">
    <property type="entry name" value="Immunoglobulins"/>
    <property type="match status" value="1"/>
</dbReference>
<dbReference type="InterPro" id="IPR007110">
    <property type="entry name" value="Ig-like_dom"/>
</dbReference>
<dbReference type="InterPro" id="IPR036179">
    <property type="entry name" value="Ig-like_dom_sf"/>
</dbReference>
<dbReference type="InterPro" id="IPR013783">
    <property type="entry name" value="Ig-like_fold"/>
</dbReference>
<dbReference type="InterPro" id="IPR003599">
    <property type="entry name" value="Ig_sub"/>
</dbReference>
<dbReference type="InterPro" id="IPR013106">
    <property type="entry name" value="Ig_V-set"/>
</dbReference>
<dbReference type="InterPro" id="IPR003110">
    <property type="entry name" value="Phos_immunorcpt_sig_ITAM"/>
</dbReference>
<dbReference type="PANTHER" id="PTHR14334">
    <property type="entry name" value="B-CELL ANTIGEN RECEPTOR COMPLEX-ASSOCIATED PROTEIN"/>
    <property type="match status" value="1"/>
</dbReference>
<dbReference type="PANTHER" id="PTHR14334:SF2">
    <property type="entry name" value="B-CELL ANTIGEN RECEPTOR COMPLEX-ASSOCIATED PROTEIN BETA CHAIN"/>
    <property type="match status" value="1"/>
</dbReference>
<dbReference type="Pfam" id="PF07686">
    <property type="entry name" value="V-set"/>
    <property type="match status" value="1"/>
</dbReference>
<dbReference type="SMART" id="SM00409">
    <property type="entry name" value="IG"/>
    <property type="match status" value="1"/>
</dbReference>
<dbReference type="SMART" id="SM00077">
    <property type="entry name" value="ITAM"/>
    <property type="match status" value="1"/>
</dbReference>
<dbReference type="SUPFAM" id="SSF48726">
    <property type="entry name" value="Immunoglobulin"/>
    <property type="match status" value="1"/>
</dbReference>
<dbReference type="PROSITE" id="PS50835">
    <property type="entry name" value="IG_LIKE"/>
    <property type="match status" value="1"/>
</dbReference>
<dbReference type="PROSITE" id="PS51055">
    <property type="entry name" value="ITAM_1"/>
    <property type="match status" value="1"/>
</dbReference>